<keyword id="KW-0687">Ribonucleoprotein</keyword>
<keyword id="KW-0689">Ribosomal protein</keyword>
<keyword id="KW-0694">RNA-binding</keyword>
<keyword id="KW-0699">rRNA-binding</keyword>
<proteinExistence type="inferred from homology"/>
<reference key="1">
    <citation type="journal article" date="1989" name="J. Mol. Evol.">
        <title>Organization and nucleotide sequence of a transcriptional unit of Methanococcus vannielii comprising genes for protein synthesis elongation factors and ribosomal proteins.</title>
        <authorList>
            <person name="Lechner K."/>
            <person name="Heller G."/>
            <person name="Boeck A."/>
        </authorList>
    </citation>
    <scope>NUCLEOTIDE SEQUENCE [GENOMIC DNA]</scope>
</reference>
<reference key="2">
    <citation type="submission" date="2007-06" db="EMBL/GenBank/DDBJ databases">
        <title>Complete sequence of Methanococcus vannielii SB.</title>
        <authorList>
            <consortium name="US DOE Joint Genome Institute"/>
            <person name="Copeland A."/>
            <person name="Lucas S."/>
            <person name="Lapidus A."/>
            <person name="Barry K."/>
            <person name="Glavina del Rio T."/>
            <person name="Dalin E."/>
            <person name="Tice H."/>
            <person name="Pitluck S."/>
            <person name="Chain P."/>
            <person name="Malfatti S."/>
            <person name="Shin M."/>
            <person name="Vergez L."/>
            <person name="Schmutz J."/>
            <person name="Larimer F."/>
            <person name="Land M."/>
            <person name="Hauser L."/>
            <person name="Kyrpides N."/>
            <person name="Anderson I."/>
            <person name="Sieprawska-Lupa M."/>
            <person name="Whitman W.B."/>
            <person name="Richardson P."/>
        </authorList>
    </citation>
    <scope>NUCLEOTIDE SEQUENCE [LARGE SCALE GENOMIC DNA]</scope>
    <source>
        <strain>ATCC 35089 / DSM 1224 / JCM 13029 / OCM 148 / SB</strain>
    </source>
</reference>
<reference key="3">
    <citation type="journal article" date="1993" name="Biol. Chem. Hoppe-Seyler">
        <title>N-terminal modification and amino-acid sequence of the ribosomal protein HmaS7 from Haloarcula marismortui and homology studies to other ribosomal proteins.</title>
        <authorList>
            <person name="Klussmann S."/>
            <person name="Franke P."/>
            <person name="Bergmann U."/>
            <person name="Kostka S."/>
            <person name="Wittmann-Liebold B."/>
        </authorList>
    </citation>
    <scope>EXTENSION OF SEQUENCE AT THE N-TERMINUS</scope>
</reference>
<name>RS7_METVS</name>
<comment type="function">
    <text evidence="1">One of the primary rRNA binding proteins, it binds directly to 16S rRNA where it nucleates assembly of the head domain of the 30S subunit. Is located at the subunit interface close to the decoding center.</text>
</comment>
<comment type="subunit">
    <text>Part of the 30S ribosomal subunit.</text>
</comment>
<comment type="similarity">
    <text evidence="1">Belongs to the universal ribosomal protein uS7 family.</text>
</comment>
<comment type="caution">
    <text evidence="2">It is uncertain whether Met-1 or Leu-7 is the initiator.</text>
</comment>
<comment type="sequence caution" evidence="2">
    <conflict type="erroneous initiation">
        <sequence resource="EMBL-CDS" id="ABR54584"/>
    </conflict>
    <text>Truncated N-terminus.</text>
</comment>
<comment type="sequence caution" evidence="2">
    <conflict type="erroneous initiation">
        <sequence resource="EMBL-CDS" id="CAA34090"/>
    </conflict>
    <text>Truncated N-terminus.</text>
</comment>
<protein>
    <recommendedName>
        <fullName evidence="1">Small ribosomal subunit protein uS7</fullName>
    </recommendedName>
    <alternativeName>
        <fullName evidence="2">30S ribosomal protein S7</fullName>
    </alternativeName>
</protein>
<feature type="chain" id="PRO_0000124405" description="Small ribosomal subunit protein uS7">
    <location>
        <begin position="1"/>
        <end position="194"/>
    </location>
</feature>
<gene>
    <name evidence="1" type="primary">rps7</name>
    <name type="ordered locus">Mevan_0678</name>
</gene>
<dbReference type="EMBL" id="X15970">
    <property type="protein sequence ID" value="CAA34090.1"/>
    <property type="status" value="ALT_INIT"/>
    <property type="molecule type" value="Genomic_DNA"/>
</dbReference>
<dbReference type="EMBL" id="CP000742">
    <property type="protein sequence ID" value="ABR54584.1"/>
    <property type="status" value="ALT_INIT"/>
    <property type="molecule type" value="Genomic_DNA"/>
</dbReference>
<dbReference type="PIR" id="S06624">
    <property type="entry name" value="R3MX7"/>
</dbReference>
<dbReference type="RefSeq" id="WP_011972486.1">
    <property type="nucleotide sequence ID" value="NC_009634.1"/>
</dbReference>
<dbReference type="SMR" id="P14037"/>
<dbReference type="STRING" id="406327.Mevan_0678"/>
<dbReference type="GeneID" id="5325020"/>
<dbReference type="KEGG" id="mvn:Mevan_0678"/>
<dbReference type="eggNOG" id="arCOG04254">
    <property type="taxonomic scope" value="Archaea"/>
</dbReference>
<dbReference type="HOGENOM" id="CLU_063975_0_0_2"/>
<dbReference type="OrthoDB" id="45346at2157"/>
<dbReference type="Proteomes" id="UP000001107">
    <property type="component" value="Chromosome"/>
</dbReference>
<dbReference type="GO" id="GO:0015935">
    <property type="term" value="C:small ribosomal subunit"/>
    <property type="evidence" value="ECO:0007669"/>
    <property type="project" value="InterPro"/>
</dbReference>
<dbReference type="GO" id="GO:0019843">
    <property type="term" value="F:rRNA binding"/>
    <property type="evidence" value="ECO:0007669"/>
    <property type="project" value="UniProtKB-UniRule"/>
</dbReference>
<dbReference type="GO" id="GO:0003735">
    <property type="term" value="F:structural constituent of ribosome"/>
    <property type="evidence" value="ECO:0007669"/>
    <property type="project" value="InterPro"/>
</dbReference>
<dbReference type="GO" id="GO:0006412">
    <property type="term" value="P:translation"/>
    <property type="evidence" value="ECO:0007669"/>
    <property type="project" value="UniProtKB-UniRule"/>
</dbReference>
<dbReference type="CDD" id="cd14867">
    <property type="entry name" value="uS7_Eukaryote"/>
    <property type="match status" value="1"/>
</dbReference>
<dbReference type="Gene3D" id="1.10.455.10">
    <property type="entry name" value="Ribosomal protein S7 domain"/>
    <property type="match status" value="1"/>
</dbReference>
<dbReference type="HAMAP" id="MF_00480_A">
    <property type="entry name" value="Ribosomal_uS7_A"/>
    <property type="match status" value="1"/>
</dbReference>
<dbReference type="InterPro" id="IPR000235">
    <property type="entry name" value="Ribosomal_uS7"/>
</dbReference>
<dbReference type="InterPro" id="IPR026018">
    <property type="entry name" value="Ribosomal_uS7_arc"/>
</dbReference>
<dbReference type="InterPro" id="IPR020606">
    <property type="entry name" value="Ribosomal_uS7_CS"/>
</dbReference>
<dbReference type="InterPro" id="IPR023798">
    <property type="entry name" value="Ribosomal_uS7_dom"/>
</dbReference>
<dbReference type="InterPro" id="IPR036823">
    <property type="entry name" value="Ribosomal_uS7_dom_sf"/>
</dbReference>
<dbReference type="InterPro" id="IPR005716">
    <property type="entry name" value="Ribosomal_uS7_euk/arc"/>
</dbReference>
<dbReference type="NCBIfam" id="NF003106">
    <property type="entry name" value="PRK04027.1"/>
    <property type="match status" value="1"/>
</dbReference>
<dbReference type="NCBIfam" id="TIGR01028">
    <property type="entry name" value="uS7_euk_arch"/>
    <property type="match status" value="1"/>
</dbReference>
<dbReference type="PANTHER" id="PTHR11205">
    <property type="entry name" value="RIBOSOMAL PROTEIN S7"/>
    <property type="match status" value="1"/>
</dbReference>
<dbReference type="Pfam" id="PF00177">
    <property type="entry name" value="Ribosomal_S7"/>
    <property type="match status" value="1"/>
</dbReference>
<dbReference type="PIRSF" id="PIRSF002122">
    <property type="entry name" value="RPS7p_RPS7a_RPS5e_RPS7o"/>
    <property type="match status" value="1"/>
</dbReference>
<dbReference type="SUPFAM" id="SSF47973">
    <property type="entry name" value="Ribosomal protein S7"/>
    <property type="match status" value="1"/>
</dbReference>
<dbReference type="PROSITE" id="PS00052">
    <property type="entry name" value="RIBOSOMAL_S7"/>
    <property type="match status" value="1"/>
</dbReference>
<organism>
    <name type="scientific">Methanococcus vannielii (strain ATCC 35089 / DSM 1224 / JCM 13029 / OCM 148 / SB)</name>
    <dbReference type="NCBI Taxonomy" id="406327"/>
    <lineage>
        <taxon>Archaea</taxon>
        <taxon>Methanobacteriati</taxon>
        <taxon>Methanobacteriota</taxon>
        <taxon>Methanomada group</taxon>
        <taxon>Methanococci</taxon>
        <taxon>Methanococcales</taxon>
        <taxon>Methanococcaceae</taxon>
        <taxon>Methanococcus</taxon>
    </lineage>
</organism>
<accession>P14037</accession>
<accession>A6UQ12</accession>
<evidence type="ECO:0000255" key="1">
    <source>
        <dbReference type="HAMAP-Rule" id="MF_00480"/>
    </source>
</evidence>
<evidence type="ECO:0000305" key="2"/>
<sequence length="194" mass="21443">MKKGEKLEIKLFGKWDSTSVTVKDPSLKSHISLNPVLIPHTAGRNSKKMFDKNKMHVVERLANKLMATQVNTGKKNEVLSIIEEALTIVENRTKENPIQVVVDALENSGPREETTRISYGGIAFLQSVDVSPSRRLDTAFRNISLGASQGAHKSKKSIAQCLADELVAASKADMQKSFAVKKKEEKERVAQSAR</sequence>